<feature type="chain" id="PRO_1000126837" description="Large ribosomal subunit protein bL31B">
    <location>
        <begin position="1"/>
        <end position="86"/>
    </location>
</feature>
<accession>B5BD63</accession>
<reference key="1">
    <citation type="journal article" date="2009" name="BMC Genomics">
        <title>Pseudogene accumulation in the evolutionary histories of Salmonella enterica serovars Paratyphi A and Typhi.</title>
        <authorList>
            <person name="Holt K.E."/>
            <person name="Thomson N.R."/>
            <person name="Wain J."/>
            <person name="Langridge G.C."/>
            <person name="Hasan R."/>
            <person name="Bhutta Z.A."/>
            <person name="Quail M.A."/>
            <person name="Norbertczak H."/>
            <person name="Walker D."/>
            <person name="Simmonds M."/>
            <person name="White B."/>
            <person name="Bason N."/>
            <person name="Mungall K."/>
            <person name="Dougan G."/>
            <person name="Parkhill J."/>
        </authorList>
    </citation>
    <scope>NUCLEOTIDE SEQUENCE [LARGE SCALE GENOMIC DNA]</scope>
    <source>
        <strain>AKU_12601</strain>
    </source>
</reference>
<name>RL31B_SALPK</name>
<proteinExistence type="inferred from homology"/>
<gene>
    <name evidence="1" type="primary">rpmE2</name>
    <name type="ordered locus">SSPA2096</name>
</gene>
<comment type="subunit">
    <text evidence="1">Part of the 50S ribosomal subunit.</text>
</comment>
<comment type="similarity">
    <text evidence="1">Belongs to the bacterial ribosomal protein bL31 family. Type B subfamily.</text>
</comment>
<organism>
    <name type="scientific">Salmonella paratyphi A (strain AKU_12601)</name>
    <dbReference type="NCBI Taxonomy" id="554290"/>
    <lineage>
        <taxon>Bacteria</taxon>
        <taxon>Pseudomonadati</taxon>
        <taxon>Pseudomonadota</taxon>
        <taxon>Gammaproteobacteria</taxon>
        <taxon>Enterobacterales</taxon>
        <taxon>Enterobacteriaceae</taxon>
        <taxon>Salmonella</taxon>
    </lineage>
</organism>
<keyword id="KW-0687">Ribonucleoprotein</keyword>
<keyword id="KW-0689">Ribosomal protein</keyword>
<protein>
    <recommendedName>
        <fullName evidence="1">Large ribosomal subunit protein bL31B</fullName>
    </recommendedName>
    <alternativeName>
        <fullName evidence="2">50S ribosomal protein L31 type B</fullName>
    </alternativeName>
</protein>
<dbReference type="EMBL" id="FM200053">
    <property type="protein sequence ID" value="CAR60306.1"/>
    <property type="molecule type" value="Genomic_DNA"/>
</dbReference>
<dbReference type="RefSeq" id="WP_000801418.1">
    <property type="nucleotide sequence ID" value="NC_011147.1"/>
</dbReference>
<dbReference type="SMR" id="B5BD63"/>
<dbReference type="KEGG" id="sek:SSPA2096"/>
<dbReference type="HOGENOM" id="CLU_114306_2_1_6"/>
<dbReference type="Proteomes" id="UP000001869">
    <property type="component" value="Chromosome"/>
</dbReference>
<dbReference type="GO" id="GO:1990904">
    <property type="term" value="C:ribonucleoprotein complex"/>
    <property type="evidence" value="ECO:0007669"/>
    <property type="project" value="UniProtKB-KW"/>
</dbReference>
<dbReference type="GO" id="GO:0005840">
    <property type="term" value="C:ribosome"/>
    <property type="evidence" value="ECO:0007669"/>
    <property type="project" value="UniProtKB-KW"/>
</dbReference>
<dbReference type="GO" id="GO:0003735">
    <property type="term" value="F:structural constituent of ribosome"/>
    <property type="evidence" value="ECO:0007669"/>
    <property type="project" value="InterPro"/>
</dbReference>
<dbReference type="GO" id="GO:0006412">
    <property type="term" value="P:translation"/>
    <property type="evidence" value="ECO:0007669"/>
    <property type="project" value="UniProtKB-UniRule"/>
</dbReference>
<dbReference type="Gene3D" id="4.10.830.30">
    <property type="entry name" value="Ribosomal protein L31"/>
    <property type="match status" value="1"/>
</dbReference>
<dbReference type="HAMAP" id="MF_00502">
    <property type="entry name" value="Ribosomal_bL31_2"/>
    <property type="match status" value="1"/>
</dbReference>
<dbReference type="InterPro" id="IPR034704">
    <property type="entry name" value="Ribosomal_bL28/bL31-like_sf"/>
</dbReference>
<dbReference type="InterPro" id="IPR002150">
    <property type="entry name" value="Ribosomal_bL31"/>
</dbReference>
<dbReference type="InterPro" id="IPR027493">
    <property type="entry name" value="Ribosomal_bL31_B"/>
</dbReference>
<dbReference type="InterPro" id="IPR042105">
    <property type="entry name" value="Ribosomal_bL31_sf"/>
</dbReference>
<dbReference type="NCBIfam" id="TIGR00105">
    <property type="entry name" value="L31"/>
    <property type="match status" value="1"/>
</dbReference>
<dbReference type="NCBIfam" id="NF002462">
    <property type="entry name" value="PRK01678.1"/>
    <property type="match status" value="1"/>
</dbReference>
<dbReference type="PANTHER" id="PTHR33280">
    <property type="entry name" value="50S RIBOSOMAL PROTEIN L31, CHLOROPLASTIC"/>
    <property type="match status" value="1"/>
</dbReference>
<dbReference type="PANTHER" id="PTHR33280:SF1">
    <property type="entry name" value="LARGE RIBOSOMAL SUBUNIT PROTEIN BL31C"/>
    <property type="match status" value="1"/>
</dbReference>
<dbReference type="Pfam" id="PF01197">
    <property type="entry name" value="Ribosomal_L31"/>
    <property type="match status" value="1"/>
</dbReference>
<dbReference type="PRINTS" id="PR01249">
    <property type="entry name" value="RIBOSOMALL31"/>
</dbReference>
<dbReference type="SUPFAM" id="SSF143800">
    <property type="entry name" value="L28p-like"/>
    <property type="match status" value="1"/>
</dbReference>
<evidence type="ECO:0000255" key="1">
    <source>
        <dbReference type="HAMAP-Rule" id="MF_00502"/>
    </source>
</evidence>
<evidence type="ECO:0000305" key="2"/>
<sequence length="86" mass="9757">MKPDIHPVYRTVVFHDTSANEYVKVGSTIKTEREIELGGVTYPYVTIDVSSKSHPFYTGRQKTFDSESSAARFQKRFGHFIGAKRG</sequence>